<name>LEXA_BACMK</name>
<dbReference type="EC" id="3.4.21.88" evidence="1"/>
<dbReference type="EMBL" id="CP000903">
    <property type="protein sequence ID" value="ABY44551.1"/>
    <property type="molecule type" value="Genomic_DNA"/>
</dbReference>
<dbReference type="RefSeq" id="WP_002087894.1">
    <property type="nucleotide sequence ID" value="NC_010184.1"/>
</dbReference>
<dbReference type="SMR" id="A9VPX5"/>
<dbReference type="MEROPS" id="S24.001"/>
<dbReference type="KEGG" id="bwe:BcerKBAB4_3377"/>
<dbReference type="eggNOG" id="COG1974">
    <property type="taxonomic scope" value="Bacteria"/>
</dbReference>
<dbReference type="HOGENOM" id="CLU_066192_45_1_9"/>
<dbReference type="Proteomes" id="UP000002154">
    <property type="component" value="Chromosome"/>
</dbReference>
<dbReference type="GO" id="GO:0003677">
    <property type="term" value="F:DNA binding"/>
    <property type="evidence" value="ECO:0007669"/>
    <property type="project" value="UniProtKB-UniRule"/>
</dbReference>
<dbReference type="GO" id="GO:0004252">
    <property type="term" value="F:serine-type endopeptidase activity"/>
    <property type="evidence" value="ECO:0007669"/>
    <property type="project" value="UniProtKB-UniRule"/>
</dbReference>
<dbReference type="GO" id="GO:0006281">
    <property type="term" value="P:DNA repair"/>
    <property type="evidence" value="ECO:0007669"/>
    <property type="project" value="UniProtKB-UniRule"/>
</dbReference>
<dbReference type="GO" id="GO:0006260">
    <property type="term" value="P:DNA replication"/>
    <property type="evidence" value="ECO:0007669"/>
    <property type="project" value="UniProtKB-UniRule"/>
</dbReference>
<dbReference type="GO" id="GO:0045892">
    <property type="term" value="P:negative regulation of DNA-templated transcription"/>
    <property type="evidence" value="ECO:0007669"/>
    <property type="project" value="UniProtKB-UniRule"/>
</dbReference>
<dbReference type="GO" id="GO:0006508">
    <property type="term" value="P:proteolysis"/>
    <property type="evidence" value="ECO:0007669"/>
    <property type="project" value="InterPro"/>
</dbReference>
<dbReference type="GO" id="GO:0009432">
    <property type="term" value="P:SOS response"/>
    <property type="evidence" value="ECO:0007669"/>
    <property type="project" value="UniProtKB-UniRule"/>
</dbReference>
<dbReference type="CDD" id="cd00090">
    <property type="entry name" value="HTH_ARSR"/>
    <property type="match status" value="1"/>
</dbReference>
<dbReference type="CDD" id="cd06529">
    <property type="entry name" value="S24_LexA-like"/>
    <property type="match status" value="1"/>
</dbReference>
<dbReference type="FunFam" id="1.10.10.10:FF:000009">
    <property type="entry name" value="LexA repressor"/>
    <property type="match status" value="1"/>
</dbReference>
<dbReference type="FunFam" id="2.10.109.10:FF:000001">
    <property type="entry name" value="LexA repressor"/>
    <property type="match status" value="1"/>
</dbReference>
<dbReference type="Gene3D" id="2.10.109.10">
    <property type="entry name" value="Umud Fragment, subunit A"/>
    <property type="match status" value="1"/>
</dbReference>
<dbReference type="Gene3D" id="1.10.10.10">
    <property type="entry name" value="Winged helix-like DNA-binding domain superfamily/Winged helix DNA-binding domain"/>
    <property type="match status" value="1"/>
</dbReference>
<dbReference type="HAMAP" id="MF_00015">
    <property type="entry name" value="LexA"/>
    <property type="match status" value="1"/>
</dbReference>
<dbReference type="InterPro" id="IPR011991">
    <property type="entry name" value="ArsR-like_HTH"/>
</dbReference>
<dbReference type="InterPro" id="IPR006200">
    <property type="entry name" value="LexA"/>
</dbReference>
<dbReference type="InterPro" id="IPR039418">
    <property type="entry name" value="LexA-like"/>
</dbReference>
<dbReference type="InterPro" id="IPR036286">
    <property type="entry name" value="LexA/Signal_pep-like_sf"/>
</dbReference>
<dbReference type="InterPro" id="IPR006199">
    <property type="entry name" value="LexA_DNA-bd_dom"/>
</dbReference>
<dbReference type="InterPro" id="IPR050077">
    <property type="entry name" value="LexA_repressor"/>
</dbReference>
<dbReference type="InterPro" id="IPR006197">
    <property type="entry name" value="Peptidase_S24_LexA"/>
</dbReference>
<dbReference type="InterPro" id="IPR015927">
    <property type="entry name" value="Peptidase_S24_S26A/B/C"/>
</dbReference>
<dbReference type="InterPro" id="IPR036388">
    <property type="entry name" value="WH-like_DNA-bd_sf"/>
</dbReference>
<dbReference type="InterPro" id="IPR036390">
    <property type="entry name" value="WH_DNA-bd_sf"/>
</dbReference>
<dbReference type="NCBIfam" id="TIGR00498">
    <property type="entry name" value="lexA"/>
    <property type="match status" value="1"/>
</dbReference>
<dbReference type="PANTHER" id="PTHR33516">
    <property type="entry name" value="LEXA REPRESSOR"/>
    <property type="match status" value="1"/>
</dbReference>
<dbReference type="PANTHER" id="PTHR33516:SF2">
    <property type="entry name" value="LEXA REPRESSOR-RELATED"/>
    <property type="match status" value="1"/>
</dbReference>
<dbReference type="Pfam" id="PF01726">
    <property type="entry name" value="LexA_DNA_bind"/>
    <property type="match status" value="1"/>
</dbReference>
<dbReference type="Pfam" id="PF00717">
    <property type="entry name" value="Peptidase_S24"/>
    <property type="match status" value="1"/>
</dbReference>
<dbReference type="PRINTS" id="PR00726">
    <property type="entry name" value="LEXASERPTASE"/>
</dbReference>
<dbReference type="SUPFAM" id="SSF51306">
    <property type="entry name" value="LexA/Signal peptidase"/>
    <property type="match status" value="1"/>
</dbReference>
<dbReference type="SUPFAM" id="SSF46785">
    <property type="entry name" value="Winged helix' DNA-binding domain"/>
    <property type="match status" value="1"/>
</dbReference>
<accession>A9VPX5</accession>
<reference key="1">
    <citation type="journal article" date="2008" name="Chem. Biol. Interact.">
        <title>Extending the Bacillus cereus group genomics to putative food-borne pathogens of different toxicity.</title>
        <authorList>
            <person name="Lapidus A."/>
            <person name="Goltsman E."/>
            <person name="Auger S."/>
            <person name="Galleron N."/>
            <person name="Segurens B."/>
            <person name="Dossat C."/>
            <person name="Land M.L."/>
            <person name="Broussolle V."/>
            <person name="Brillard J."/>
            <person name="Guinebretiere M.-H."/>
            <person name="Sanchis V."/>
            <person name="Nguen-the C."/>
            <person name="Lereclus D."/>
            <person name="Richardson P."/>
            <person name="Wincker P."/>
            <person name="Weissenbach J."/>
            <person name="Ehrlich S.D."/>
            <person name="Sorokin A."/>
        </authorList>
    </citation>
    <scope>NUCLEOTIDE SEQUENCE [LARGE SCALE GENOMIC DNA]</scope>
    <source>
        <strain>KBAB4</strain>
    </source>
</reference>
<organism>
    <name type="scientific">Bacillus mycoides (strain KBAB4)</name>
    <name type="common">Bacillus weihenstephanensis</name>
    <dbReference type="NCBI Taxonomy" id="315730"/>
    <lineage>
        <taxon>Bacteria</taxon>
        <taxon>Bacillati</taxon>
        <taxon>Bacillota</taxon>
        <taxon>Bacilli</taxon>
        <taxon>Bacillales</taxon>
        <taxon>Bacillaceae</taxon>
        <taxon>Bacillus</taxon>
        <taxon>Bacillus cereus group</taxon>
    </lineage>
</organism>
<gene>
    <name evidence="1" type="primary">lexA</name>
    <name type="ordered locus">BcerKBAB4_3377</name>
</gene>
<sequence length="204" mass="22629">MEKLTKRQQDILDFIKLKVQEKGYPPSVREIGQAVGLASSSTVHGHLSRLEEKGYIRRDPTKPRAIEILGDNRTETQSVIQVPIIGKVTAGLPITAVESVEDHFPLPASIVAGADQVFMLRISGDSMIEAGIFDGDLVVVRQQQSAYNGEIVVALTEDNEATVKRFYKEKDHFRLQPENSSLEPIILKQVSVIGKVIGVYRDLH</sequence>
<feature type="chain" id="PRO_1000089545" description="LexA repressor">
    <location>
        <begin position="1"/>
        <end position="204"/>
    </location>
</feature>
<feature type="DNA-binding region" description="H-T-H motif" evidence="1">
    <location>
        <begin position="28"/>
        <end position="48"/>
    </location>
</feature>
<feature type="active site" description="For autocatalytic cleavage activity" evidence="1">
    <location>
        <position position="126"/>
    </location>
</feature>
<feature type="active site" description="For autocatalytic cleavage activity" evidence="1">
    <location>
        <position position="164"/>
    </location>
</feature>
<feature type="site" description="Cleavage; by autolysis" evidence="1">
    <location>
        <begin position="90"/>
        <end position="91"/>
    </location>
</feature>
<proteinExistence type="inferred from homology"/>
<protein>
    <recommendedName>
        <fullName evidence="1">LexA repressor</fullName>
        <ecNumber evidence="1">3.4.21.88</ecNumber>
    </recommendedName>
</protein>
<evidence type="ECO:0000255" key="1">
    <source>
        <dbReference type="HAMAP-Rule" id="MF_00015"/>
    </source>
</evidence>
<keyword id="KW-0068">Autocatalytic cleavage</keyword>
<keyword id="KW-0227">DNA damage</keyword>
<keyword id="KW-0234">DNA repair</keyword>
<keyword id="KW-0235">DNA replication</keyword>
<keyword id="KW-0238">DNA-binding</keyword>
<keyword id="KW-0378">Hydrolase</keyword>
<keyword id="KW-0678">Repressor</keyword>
<keyword id="KW-0742">SOS response</keyword>
<keyword id="KW-0804">Transcription</keyword>
<keyword id="KW-0805">Transcription regulation</keyword>
<comment type="function">
    <text evidence="1">Represses a number of genes involved in the response to DNA damage (SOS response), including recA and lexA. In the presence of single-stranded DNA, RecA interacts with LexA causing an autocatalytic cleavage which disrupts the DNA-binding part of LexA, leading to derepression of the SOS regulon and eventually DNA repair.</text>
</comment>
<comment type="catalytic activity">
    <reaction evidence="1">
        <text>Hydrolysis of Ala-|-Gly bond in repressor LexA.</text>
        <dbReference type="EC" id="3.4.21.88"/>
    </reaction>
</comment>
<comment type="subunit">
    <text evidence="1">Homodimer.</text>
</comment>
<comment type="similarity">
    <text evidence="1">Belongs to the peptidase S24 family.</text>
</comment>